<feature type="chain" id="PRO_0000289057" description="Neuronatin">
    <location>
        <begin position="1"/>
        <end position="81"/>
    </location>
</feature>
<sequence>MAAVAAASAELLIIGWYIFRVLLQVFLECCIYWVGFAFRNPPGTQPIARSEVFRYSLQKLAYTVSRTGRHVLGERRQRAPN</sequence>
<protein>
    <recommendedName>
        <fullName>Neuronatin</fullName>
    </recommendedName>
</protein>
<evidence type="ECO:0000250" key="1"/>
<evidence type="ECO:0000305" key="2"/>
<accession>Q0Q043</accession>
<name>NNAT_PIG</name>
<keyword id="KW-0217">Developmental protein</keyword>
<keyword id="KW-1185">Reference proteome</keyword>
<gene>
    <name type="primary">NNAT</name>
</gene>
<organism>
    <name type="scientific">Sus scrofa</name>
    <name type="common">Pig</name>
    <dbReference type="NCBI Taxonomy" id="9823"/>
    <lineage>
        <taxon>Eukaryota</taxon>
        <taxon>Metazoa</taxon>
        <taxon>Chordata</taxon>
        <taxon>Craniata</taxon>
        <taxon>Vertebrata</taxon>
        <taxon>Euteleostomi</taxon>
        <taxon>Mammalia</taxon>
        <taxon>Eutheria</taxon>
        <taxon>Laurasiatheria</taxon>
        <taxon>Artiodactyla</taxon>
        <taxon>Suina</taxon>
        <taxon>Suidae</taxon>
        <taxon>Sus</taxon>
    </lineage>
</organism>
<dbReference type="EMBL" id="DQ666422">
    <property type="protein sequence ID" value="ABG72731.1"/>
    <property type="molecule type" value="Genomic_DNA"/>
</dbReference>
<dbReference type="RefSeq" id="NP_001116462.1">
    <property type="nucleotide sequence ID" value="NM_001122990.2"/>
</dbReference>
<dbReference type="FunCoup" id="Q0Q043">
    <property type="interactions" value="87"/>
</dbReference>
<dbReference type="PaxDb" id="9823-ENSSSCP00000007813"/>
<dbReference type="GeneID" id="449004"/>
<dbReference type="KEGG" id="ssc:449004"/>
<dbReference type="CTD" id="4826"/>
<dbReference type="eggNOG" id="ENOG502TDP2">
    <property type="taxonomic scope" value="Eukaryota"/>
</dbReference>
<dbReference type="HOGENOM" id="CLU_152636_0_0_1"/>
<dbReference type="InParanoid" id="Q0Q043"/>
<dbReference type="OMA" id="IAENECI"/>
<dbReference type="OrthoDB" id="9823442at2759"/>
<dbReference type="TreeFam" id="TF338710"/>
<dbReference type="Proteomes" id="UP000008227">
    <property type="component" value="Unplaced"/>
</dbReference>
<dbReference type="Proteomes" id="UP000314985">
    <property type="component" value="Unplaced"/>
</dbReference>
<dbReference type="Proteomes" id="UP000694570">
    <property type="component" value="Unplaced"/>
</dbReference>
<dbReference type="Proteomes" id="UP000694571">
    <property type="component" value="Unplaced"/>
</dbReference>
<dbReference type="Proteomes" id="UP000694720">
    <property type="component" value="Unplaced"/>
</dbReference>
<dbReference type="Proteomes" id="UP000694722">
    <property type="component" value="Unplaced"/>
</dbReference>
<dbReference type="Proteomes" id="UP000694723">
    <property type="component" value="Unplaced"/>
</dbReference>
<dbReference type="Proteomes" id="UP000694724">
    <property type="component" value="Unplaced"/>
</dbReference>
<dbReference type="Proteomes" id="UP000694725">
    <property type="component" value="Unplaced"/>
</dbReference>
<dbReference type="Proteomes" id="UP000694726">
    <property type="component" value="Unplaced"/>
</dbReference>
<dbReference type="Proteomes" id="UP000694727">
    <property type="component" value="Unplaced"/>
</dbReference>
<dbReference type="Proteomes" id="UP000694728">
    <property type="component" value="Unplaced"/>
</dbReference>
<dbReference type="GO" id="GO:0005737">
    <property type="term" value="C:cytoplasm"/>
    <property type="evidence" value="ECO:0000318"/>
    <property type="project" value="GO_Central"/>
</dbReference>
<dbReference type="GO" id="GO:0007420">
    <property type="term" value="P:brain development"/>
    <property type="evidence" value="ECO:0007669"/>
    <property type="project" value="InterPro"/>
</dbReference>
<dbReference type="GO" id="GO:0032024">
    <property type="term" value="P:positive regulation of insulin secretion"/>
    <property type="evidence" value="ECO:0000318"/>
    <property type="project" value="GO_Central"/>
</dbReference>
<dbReference type="InterPro" id="IPR024885">
    <property type="entry name" value="Neuronatin"/>
</dbReference>
<dbReference type="PANTHER" id="PTHR15285">
    <property type="entry name" value="NEURONATIN"/>
    <property type="match status" value="1"/>
</dbReference>
<dbReference type="PANTHER" id="PTHR15285:SF0">
    <property type="entry name" value="NEURONATIN"/>
    <property type="match status" value="1"/>
</dbReference>
<proteinExistence type="inferred from homology"/>
<comment type="function">
    <text evidence="1">May participate in the maintenance of segment identity in the hindbrain and pituitary development, and maturation or maintenance of the overall structure of the nervous system. May function as a regulatory subunit of ion channels (By similarity).</text>
</comment>
<comment type="similarity">
    <text evidence="2">Belongs to the neuronatin family.</text>
</comment>
<reference key="1">
    <citation type="submission" date="2006-06" db="EMBL/GenBank/DDBJ databases">
        <title>Imprinting analysis of porcine NNAT and PEG10 gene.</title>
        <authorList>
            <person name="Cheng H.C."/>
            <person name="Zhang F.W."/>
            <person name="Deng C.Y."/>
        </authorList>
    </citation>
    <scope>NUCLEOTIDE SEQUENCE [GENOMIC DNA]</scope>
</reference>